<organism>
    <name type="scientific">Oncorhynchus mykiss</name>
    <name type="common">Rainbow trout</name>
    <name type="synonym">Salmo gairdneri</name>
    <dbReference type="NCBI Taxonomy" id="8022"/>
    <lineage>
        <taxon>Eukaryota</taxon>
        <taxon>Metazoa</taxon>
        <taxon>Chordata</taxon>
        <taxon>Craniata</taxon>
        <taxon>Vertebrata</taxon>
        <taxon>Euteleostomi</taxon>
        <taxon>Actinopterygii</taxon>
        <taxon>Neopterygii</taxon>
        <taxon>Teleostei</taxon>
        <taxon>Protacanthopterygii</taxon>
        <taxon>Salmoniformes</taxon>
        <taxon>Salmonidae</taxon>
        <taxon>Salmoninae</taxon>
        <taxon>Oncorhynchus</taxon>
    </lineage>
</organism>
<evidence type="ECO:0000250" key="1"/>
<evidence type="ECO:0000255" key="2"/>
<evidence type="ECO:0000305" key="3"/>
<feature type="chain" id="PRO_0000117960" description="NADH-ubiquinone oxidoreductase chain 4">
    <location>
        <begin position="1"/>
        <end position="460"/>
    </location>
</feature>
<feature type="transmembrane region" description="Helical" evidence="2">
    <location>
        <begin position="20"/>
        <end position="42"/>
    </location>
</feature>
<feature type="transmembrane region" description="Helical" evidence="2">
    <location>
        <begin position="61"/>
        <end position="81"/>
    </location>
</feature>
<feature type="transmembrane region" description="Helical" evidence="2">
    <location>
        <begin position="94"/>
        <end position="113"/>
    </location>
</feature>
<feature type="transmembrane region" description="Helical" evidence="2">
    <location>
        <begin position="117"/>
        <end position="139"/>
    </location>
</feature>
<feature type="transmembrane region" description="Helical" evidence="2">
    <location>
        <begin position="148"/>
        <end position="168"/>
    </location>
</feature>
<feature type="transmembrane region" description="Helical" evidence="2">
    <location>
        <begin position="195"/>
        <end position="215"/>
    </location>
</feature>
<feature type="transmembrane region" description="Helical" evidence="2">
    <location>
        <begin position="225"/>
        <end position="245"/>
    </location>
</feature>
<feature type="transmembrane region" description="Helical" evidence="2">
    <location>
        <begin position="258"/>
        <end position="278"/>
    </location>
</feature>
<feature type="transmembrane region" description="Helical" evidence="2">
    <location>
        <begin position="285"/>
        <end position="304"/>
    </location>
</feature>
<feature type="transmembrane region" description="Helical" evidence="2">
    <location>
        <begin position="308"/>
        <end position="330"/>
    </location>
</feature>
<feature type="transmembrane region" description="Helical" evidence="2">
    <location>
        <begin position="351"/>
        <end position="371"/>
    </location>
</feature>
<feature type="transmembrane region" description="Helical" evidence="2">
    <location>
        <begin position="394"/>
        <end position="414"/>
    </location>
</feature>
<feature type="transmembrane region" description="Helical" evidence="2">
    <location>
        <begin position="436"/>
        <end position="456"/>
    </location>
</feature>
<feature type="sequence conflict" description="In Ref. 2; CAA32180." evidence="3" ref="2">
    <original>A</original>
    <variation>SS</variation>
    <location>
        <position position="233"/>
    </location>
</feature>
<feature type="sequence conflict" description="In Ref. 2." evidence="3" ref="2">
    <original>GGYGMMRMMVMLDPL</original>
    <variation>EGSHIMCYTSPI</variation>
    <location>
        <begin position="240"/>
        <end position="254"/>
    </location>
</feature>
<feature type="sequence conflict" description="In Ref. 2." evidence="3" ref="2">
    <original>A</original>
    <variation>V</variation>
    <location>
        <position position="259"/>
    </location>
</feature>
<feature type="sequence conflict" description="In Ref. 2." evidence="3" ref="2">
    <original>F</original>
    <variation>L</variation>
    <location>
        <position position="262"/>
    </location>
</feature>
<geneLocation type="mitochondrion"/>
<name>NU4M_ONCMY</name>
<dbReference type="EC" id="7.1.1.2"/>
<dbReference type="EMBL" id="L29771">
    <property type="protein sequence ID" value="AAB03356.1"/>
    <property type="molecule type" value="Genomic_DNA"/>
</dbReference>
<dbReference type="EMBL" id="X14014">
    <property type="protein sequence ID" value="CAA32180.1"/>
    <property type="molecule type" value="Genomic_DNA"/>
</dbReference>
<dbReference type="PIR" id="T09866">
    <property type="entry name" value="T09866"/>
</dbReference>
<dbReference type="RefSeq" id="NP_008299.1">
    <property type="nucleotide sequence ID" value="NC_001717.1"/>
</dbReference>
<dbReference type="SMR" id="P11631"/>
<dbReference type="GeneID" id="807978"/>
<dbReference type="KEGG" id="omy:807978"/>
<dbReference type="CTD" id="4538"/>
<dbReference type="OrthoDB" id="564260at2759"/>
<dbReference type="Proteomes" id="UP000694395">
    <property type="component" value="Unplaced"/>
</dbReference>
<dbReference type="GO" id="GO:0031966">
    <property type="term" value="C:mitochondrial membrane"/>
    <property type="evidence" value="ECO:0007669"/>
    <property type="project" value="UniProtKB-SubCell"/>
</dbReference>
<dbReference type="GO" id="GO:0008137">
    <property type="term" value="F:NADH dehydrogenase (ubiquinone) activity"/>
    <property type="evidence" value="ECO:0007669"/>
    <property type="project" value="UniProtKB-EC"/>
</dbReference>
<dbReference type="GO" id="GO:0048039">
    <property type="term" value="F:ubiquinone binding"/>
    <property type="evidence" value="ECO:0007669"/>
    <property type="project" value="TreeGrafter"/>
</dbReference>
<dbReference type="GO" id="GO:0042773">
    <property type="term" value="P:ATP synthesis coupled electron transport"/>
    <property type="evidence" value="ECO:0007669"/>
    <property type="project" value="InterPro"/>
</dbReference>
<dbReference type="GO" id="GO:0015990">
    <property type="term" value="P:electron transport coupled proton transport"/>
    <property type="evidence" value="ECO:0007669"/>
    <property type="project" value="TreeGrafter"/>
</dbReference>
<dbReference type="InterPro" id="IPR000260">
    <property type="entry name" value="NADH4_N"/>
</dbReference>
<dbReference type="InterPro" id="IPR010227">
    <property type="entry name" value="NADH_Q_OxRdtase_chainM/4"/>
</dbReference>
<dbReference type="InterPro" id="IPR003918">
    <property type="entry name" value="NADH_UbQ_OxRdtase"/>
</dbReference>
<dbReference type="InterPro" id="IPR001750">
    <property type="entry name" value="ND/Mrp_TM"/>
</dbReference>
<dbReference type="NCBIfam" id="TIGR01972">
    <property type="entry name" value="NDH_I_M"/>
    <property type="match status" value="1"/>
</dbReference>
<dbReference type="PANTHER" id="PTHR43507">
    <property type="entry name" value="NADH-UBIQUINONE OXIDOREDUCTASE CHAIN 4"/>
    <property type="match status" value="1"/>
</dbReference>
<dbReference type="PANTHER" id="PTHR43507:SF20">
    <property type="entry name" value="NADH-UBIQUINONE OXIDOREDUCTASE CHAIN 4"/>
    <property type="match status" value="1"/>
</dbReference>
<dbReference type="Pfam" id="PF01059">
    <property type="entry name" value="Oxidored_q5_N"/>
    <property type="match status" value="1"/>
</dbReference>
<dbReference type="Pfam" id="PF00361">
    <property type="entry name" value="Proton_antipo_M"/>
    <property type="match status" value="1"/>
</dbReference>
<dbReference type="PRINTS" id="PR01437">
    <property type="entry name" value="NUOXDRDTASE4"/>
</dbReference>
<comment type="function">
    <text evidence="1">Core subunit of the mitochondrial membrane respiratory chain NADH dehydrogenase (Complex I) that is believed to belong to the minimal assembly required for catalysis. Complex I functions in the transfer of electrons from NADH to the respiratory chain. The immediate electron acceptor for the enzyme is believed to be ubiquinone (By similarity).</text>
</comment>
<comment type="catalytic activity">
    <reaction>
        <text>a ubiquinone + NADH + 5 H(+)(in) = a ubiquinol + NAD(+) + 4 H(+)(out)</text>
        <dbReference type="Rhea" id="RHEA:29091"/>
        <dbReference type="Rhea" id="RHEA-COMP:9565"/>
        <dbReference type="Rhea" id="RHEA-COMP:9566"/>
        <dbReference type="ChEBI" id="CHEBI:15378"/>
        <dbReference type="ChEBI" id="CHEBI:16389"/>
        <dbReference type="ChEBI" id="CHEBI:17976"/>
        <dbReference type="ChEBI" id="CHEBI:57540"/>
        <dbReference type="ChEBI" id="CHEBI:57945"/>
        <dbReference type="EC" id="7.1.1.2"/>
    </reaction>
</comment>
<comment type="subcellular location">
    <subcellularLocation>
        <location evidence="1">Mitochondrion membrane</location>
        <topology evidence="1">Multi-pass membrane protein</topology>
    </subcellularLocation>
</comment>
<comment type="similarity">
    <text evidence="3">Belongs to the complex I subunit 4 family.</text>
</comment>
<gene>
    <name type="primary">MT-ND4</name>
    <name type="synonym">MTND4</name>
    <name type="synonym">NADH4</name>
    <name type="synonym">ND4</name>
</gene>
<keyword id="KW-0249">Electron transport</keyword>
<keyword id="KW-0472">Membrane</keyword>
<keyword id="KW-0496">Mitochondrion</keyword>
<keyword id="KW-0520">NAD</keyword>
<keyword id="KW-0679">Respiratory chain</keyword>
<keyword id="KW-1278">Translocase</keyword>
<keyword id="KW-0812">Transmembrane</keyword>
<keyword id="KW-1133">Transmembrane helix</keyword>
<keyword id="KW-0813">Transport</keyword>
<keyword id="KW-0830">Ubiquinone</keyword>
<proteinExistence type="inferred from homology"/>
<accession>P11631</accession>
<protein>
    <recommendedName>
        <fullName>NADH-ubiquinone oxidoreductase chain 4</fullName>
        <ecNumber>7.1.1.2</ecNumber>
    </recommendedName>
    <alternativeName>
        <fullName>NADH dehydrogenase subunit 4</fullName>
    </alternativeName>
</protein>
<sequence>MLKILIPTLMLFPTIWLSPAKWLWTTSIAQSLIIALASLSWLKWSSETGWSSSNLYLATDPLSTPLLVLTCWLLPLMILASQSHLSPEPLNRQRAYISLLVSLQTFLVLAFGATEIIMFYVMFEATLLPTLIIITRWGNQTERLNAGTYFLFYTLAGSLPLLVALLLMQNDNGTLSMFTLQYTQPLHLLTWGDKLWWAACLLAFLVKMPLYGVHLWLPKAHVEAPIAGSMILAAVLLKLGGYGMMRMMVMLDPLTKELAYPFIVLALWGIIMTGSICLRQTDLKSLIAYSSVGHMGLVAGGILIQTPWGFTGAIILMIAHGLASSALFCLANTSYERTHSRTMLLARGMQMILPLMTTWWFVASLANLALPPLPNLMGELMIITSMFNWSYWTLILTGLGTLITASYSLYLFLMTQRGPLPSHIIALEPTHTREHLLIILHLIPIVLLILKPELMWGWCF</sequence>
<reference key="1">
    <citation type="journal article" date="1995" name="J. Mol. Evol.">
        <title>The complete nucleotide sequence of the mitochondrial DNA genome of the rainbow trout, Oncorhynchus mykiss.</title>
        <authorList>
            <person name="Zardoya R."/>
            <person name="Garrido-Pertierra A."/>
            <person name="Bautista J.M."/>
        </authorList>
    </citation>
    <scope>NUCLEOTIDE SEQUENCE [GENOMIC DNA]</scope>
    <source>
        <tissue>Liver</tissue>
    </source>
</reference>
<reference key="2">
    <citation type="journal article" date="1988" name="Curr. Genet.">
        <title>Cloning and sequence analysis of an XbaI fragment of rainbow trout mitochondrial DNA.</title>
        <authorList>
            <person name="Davidson W.S."/>
            <person name="Bartlett S.E."/>
            <person name="Birt T.P."/>
            <person name="Green J.M."/>
        </authorList>
    </citation>
    <scope>NUCLEOTIDE SEQUENCE [GENOMIC DNA] OF 84-262</scope>
</reference>